<keyword id="KW-0066">ATP synthesis</keyword>
<keyword id="KW-0067">ATP-binding</keyword>
<keyword id="KW-0997">Cell inner membrane</keyword>
<keyword id="KW-1003">Cell membrane</keyword>
<keyword id="KW-0139">CF(1)</keyword>
<keyword id="KW-0375">Hydrogen ion transport</keyword>
<keyword id="KW-0406">Ion transport</keyword>
<keyword id="KW-0472">Membrane</keyword>
<keyword id="KW-0547">Nucleotide-binding</keyword>
<keyword id="KW-1185">Reference proteome</keyword>
<keyword id="KW-1278">Translocase</keyword>
<keyword id="KW-0813">Transport</keyword>
<reference key="1">
    <citation type="journal article" date="2002" name="Environ. Microbiol.">
        <title>Complete genome sequence and comparative analysis of the metabolically versatile Pseudomonas putida KT2440.</title>
        <authorList>
            <person name="Nelson K.E."/>
            <person name="Weinel C."/>
            <person name="Paulsen I.T."/>
            <person name="Dodson R.J."/>
            <person name="Hilbert H."/>
            <person name="Martins dos Santos V.A.P."/>
            <person name="Fouts D.E."/>
            <person name="Gill S.R."/>
            <person name="Pop M."/>
            <person name="Holmes M."/>
            <person name="Brinkac L.M."/>
            <person name="Beanan M.J."/>
            <person name="DeBoy R.T."/>
            <person name="Daugherty S.C."/>
            <person name="Kolonay J.F."/>
            <person name="Madupu R."/>
            <person name="Nelson W.C."/>
            <person name="White O."/>
            <person name="Peterson J.D."/>
            <person name="Khouri H.M."/>
            <person name="Hance I."/>
            <person name="Chris Lee P."/>
            <person name="Holtzapple E.K."/>
            <person name="Scanlan D."/>
            <person name="Tran K."/>
            <person name="Moazzez A."/>
            <person name="Utterback T.R."/>
            <person name="Rizzo M."/>
            <person name="Lee K."/>
            <person name="Kosack D."/>
            <person name="Moestl D."/>
            <person name="Wedler H."/>
            <person name="Lauber J."/>
            <person name="Stjepandic D."/>
            <person name="Hoheisel J."/>
            <person name="Straetz M."/>
            <person name="Heim S."/>
            <person name="Kiewitz C."/>
            <person name="Eisen J.A."/>
            <person name="Timmis K.N."/>
            <person name="Duesterhoeft A."/>
            <person name="Tuemmler B."/>
            <person name="Fraser C.M."/>
        </authorList>
    </citation>
    <scope>NUCLEOTIDE SEQUENCE [LARGE SCALE GENOMIC DNA]</scope>
    <source>
        <strain>ATCC 47054 / DSM 6125 / CFBP 8728 / NCIMB 11950 / KT2440</strain>
    </source>
</reference>
<feature type="chain" id="PRO_0000238330" description="ATP synthase subunit alpha">
    <location>
        <begin position="1"/>
        <end position="514"/>
    </location>
</feature>
<feature type="binding site" evidence="1">
    <location>
        <begin position="170"/>
        <end position="177"/>
    </location>
    <ligand>
        <name>ATP</name>
        <dbReference type="ChEBI" id="CHEBI:30616"/>
    </ligand>
</feature>
<feature type="site" description="Required for activity" evidence="1">
    <location>
        <position position="374"/>
    </location>
</feature>
<proteinExistence type="inferred from homology"/>
<accession>Q88BX2</accession>
<gene>
    <name evidence="1" type="primary">atpA</name>
    <name type="ordered locus">PP_5415</name>
</gene>
<sequence length="514" mass="55352">MQQLNPSEISEIIKGRIDNLDVSSQARNEGTVVSVSDGIVRIHGLADVMYGEMIEFPGSVYGMALNLEQDSVGAVILGAYDTLAEGMSAKCTGRILEVPVGKELLGRVVDALGNPIDGKGPLGNTQTDAVEKVAPGVIWRKSVDQPVQTGYKSVDAMIPVGRGQRELIIGDRQIGKTAMAIDAIINQKDSGIFCVYVAVGQKRSTVANIVRKLEETGALANTIVVVASASESAALQFLAPYAGCTMGEFFRDRGEDALIVYDDLSKQAVAYRQISLLLRRPPGREAYPGDVFYLHSRLLERASRVSEEYVEKFTNGAVTGKTGSLTALPIIETQAGDVSAFVPTNVISITDGQIFLESAMFNSGIRPAVNAGVSVSRVGGAAQTKIIKKLSGGIRTALAQYRELAAFAQFASDLDEATRKQLEHGQRVTELMKQKQYAPMSIADMALSLYAAERGFLIDVEVSKIGSFEQALIAFFNRDHAELMAKINVKGDFNDEIDAGLKAGIEKFKATQTW</sequence>
<organism>
    <name type="scientific">Pseudomonas putida (strain ATCC 47054 / DSM 6125 / CFBP 8728 / NCIMB 11950 / KT2440)</name>
    <dbReference type="NCBI Taxonomy" id="160488"/>
    <lineage>
        <taxon>Bacteria</taxon>
        <taxon>Pseudomonadati</taxon>
        <taxon>Pseudomonadota</taxon>
        <taxon>Gammaproteobacteria</taxon>
        <taxon>Pseudomonadales</taxon>
        <taxon>Pseudomonadaceae</taxon>
        <taxon>Pseudomonas</taxon>
    </lineage>
</organism>
<comment type="function">
    <text evidence="1">Produces ATP from ADP in the presence of a proton gradient across the membrane. The alpha chain is a regulatory subunit.</text>
</comment>
<comment type="catalytic activity">
    <reaction evidence="1">
        <text>ATP + H2O + 4 H(+)(in) = ADP + phosphate + 5 H(+)(out)</text>
        <dbReference type="Rhea" id="RHEA:57720"/>
        <dbReference type="ChEBI" id="CHEBI:15377"/>
        <dbReference type="ChEBI" id="CHEBI:15378"/>
        <dbReference type="ChEBI" id="CHEBI:30616"/>
        <dbReference type="ChEBI" id="CHEBI:43474"/>
        <dbReference type="ChEBI" id="CHEBI:456216"/>
        <dbReference type="EC" id="7.1.2.2"/>
    </reaction>
</comment>
<comment type="subunit">
    <text evidence="1">F-type ATPases have 2 components, CF(1) - the catalytic core - and CF(0) - the membrane proton channel. CF(1) has five subunits: alpha(3), beta(3), gamma(1), delta(1), epsilon(1). CF(0) has three main subunits: a(1), b(2) and c(9-12). The alpha and beta chains form an alternating ring which encloses part of the gamma chain. CF(1) is attached to CF(0) by a central stalk formed by the gamma and epsilon chains, while a peripheral stalk is formed by the delta and b chains.</text>
</comment>
<comment type="subcellular location">
    <subcellularLocation>
        <location evidence="1">Cell inner membrane</location>
        <topology evidence="1">Peripheral membrane protein</topology>
    </subcellularLocation>
</comment>
<comment type="similarity">
    <text evidence="1">Belongs to the ATPase alpha/beta chains family.</text>
</comment>
<protein>
    <recommendedName>
        <fullName evidence="1">ATP synthase subunit alpha</fullName>
        <ecNumber evidence="1">7.1.2.2</ecNumber>
    </recommendedName>
    <alternativeName>
        <fullName evidence="1">ATP synthase F1 sector subunit alpha</fullName>
    </alternativeName>
    <alternativeName>
        <fullName evidence="1">F-ATPase subunit alpha</fullName>
    </alternativeName>
</protein>
<name>ATPA_PSEPK</name>
<dbReference type="EC" id="7.1.2.2" evidence="1"/>
<dbReference type="EMBL" id="AE015451">
    <property type="protein sequence ID" value="AAN70979.1"/>
    <property type="molecule type" value="Genomic_DNA"/>
</dbReference>
<dbReference type="RefSeq" id="NP_747515.1">
    <property type="nucleotide sequence ID" value="NC_002947.4"/>
</dbReference>
<dbReference type="RefSeq" id="WP_010955887.1">
    <property type="nucleotide sequence ID" value="NZ_CP169744.1"/>
</dbReference>
<dbReference type="SMR" id="Q88BX2"/>
<dbReference type="STRING" id="160488.PP_5415"/>
<dbReference type="PaxDb" id="160488-PP_5415"/>
<dbReference type="GeneID" id="83683228"/>
<dbReference type="KEGG" id="ppu:PP_5415"/>
<dbReference type="PATRIC" id="fig|160488.4.peg.5783"/>
<dbReference type="eggNOG" id="COG0056">
    <property type="taxonomic scope" value="Bacteria"/>
</dbReference>
<dbReference type="HOGENOM" id="CLU_010091_2_1_6"/>
<dbReference type="OrthoDB" id="9803053at2"/>
<dbReference type="PhylomeDB" id="Q88BX2"/>
<dbReference type="BioCyc" id="PPUT160488:G1G01-5781-MONOMER"/>
<dbReference type="Proteomes" id="UP000000556">
    <property type="component" value="Chromosome"/>
</dbReference>
<dbReference type="GO" id="GO:0005886">
    <property type="term" value="C:plasma membrane"/>
    <property type="evidence" value="ECO:0007669"/>
    <property type="project" value="UniProtKB-SubCell"/>
</dbReference>
<dbReference type="GO" id="GO:0045259">
    <property type="term" value="C:proton-transporting ATP synthase complex"/>
    <property type="evidence" value="ECO:0007669"/>
    <property type="project" value="UniProtKB-KW"/>
</dbReference>
<dbReference type="GO" id="GO:0043531">
    <property type="term" value="F:ADP binding"/>
    <property type="evidence" value="ECO:0007669"/>
    <property type="project" value="TreeGrafter"/>
</dbReference>
<dbReference type="GO" id="GO:0005524">
    <property type="term" value="F:ATP binding"/>
    <property type="evidence" value="ECO:0007669"/>
    <property type="project" value="UniProtKB-UniRule"/>
</dbReference>
<dbReference type="GO" id="GO:0046933">
    <property type="term" value="F:proton-transporting ATP synthase activity, rotational mechanism"/>
    <property type="evidence" value="ECO:0007669"/>
    <property type="project" value="UniProtKB-UniRule"/>
</dbReference>
<dbReference type="CDD" id="cd18113">
    <property type="entry name" value="ATP-synt_F1_alpha_C"/>
    <property type="match status" value="1"/>
</dbReference>
<dbReference type="CDD" id="cd18116">
    <property type="entry name" value="ATP-synt_F1_alpha_N"/>
    <property type="match status" value="1"/>
</dbReference>
<dbReference type="CDD" id="cd01132">
    <property type="entry name" value="F1-ATPase_alpha_CD"/>
    <property type="match status" value="1"/>
</dbReference>
<dbReference type="FunFam" id="1.20.150.20:FF:000001">
    <property type="entry name" value="ATP synthase subunit alpha"/>
    <property type="match status" value="1"/>
</dbReference>
<dbReference type="FunFam" id="2.40.30.20:FF:000001">
    <property type="entry name" value="ATP synthase subunit alpha"/>
    <property type="match status" value="1"/>
</dbReference>
<dbReference type="FunFam" id="3.40.50.300:FF:000002">
    <property type="entry name" value="ATP synthase subunit alpha"/>
    <property type="match status" value="1"/>
</dbReference>
<dbReference type="Gene3D" id="2.40.30.20">
    <property type="match status" value="1"/>
</dbReference>
<dbReference type="Gene3D" id="1.20.150.20">
    <property type="entry name" value="ATP synthase alpha/beta chain, C-terminal domain"/>
    <property type="match status" value="1"/>
</dbReference>
<dbReference type="Gene3D" id="3.40.50.300">
    <property type="entry name" value="P-loop containing nucleotide triphosphate hydrolases"/>
    <property type="match status" value="1"/>
</dbReference>
<dbReference type="HAMAP" id="MF_01346">
    <property type="entry name" value="ATP_synth_alpha_bact"/>
    <property type="match status" value="1"/>
</dbReference>
<dbReference type="InterPro" id="IPR023366">
    <property type="entry name" value="ATP_synth_asu-like_sf"/>
</dbReference>
<dbReference type="InterPro" id="IPR000793">
    <property type="entry name" value="ATP_synth_asu_C"/>
</dbReference>
<dbReference type="InterPro" id="IPR038376">
    <property type="entry name" value="ATP_synth_asu_C_sf"/>
</dbReference>
<dbReference type="InterPro" id="IPR033732">
    <property type="entry name" value="ATP_synth_F1_a_nt-bd_dom"/>
</dbReference>
<dbReference type="InterPro" id="IPR005294">
    <property type="entry name" value="ATP_synth_F1_asu"/>
</dbReference>
<dbReference type="InterPro" id="IPR020003">
    <property type="entry name" value="ATPase_a/bsu_AS"/>
</dbReference>
<dbReference type="InterPro" id="IPR004100">
    <property type="entry name" value="ATPase_F1/V1/A1_a/bsu_N"/>
</dbReference>
<dbReference type="InterPro" id="IPR036121">
    <property type="entry name" value="ATPase_F1/V1/A1_a/bsu_N_sf"/>
</dbReference>
<dbReference type="InterPro" id="IPR000194">
    <property type="entry name" value="ATPase_F1/V1/A1_a/bsu_nucl-bd"/>
</dbReference>
<dbReference type="InterPro" id="IPR027417">
    <property type="entry name" value="P-loop_NTPase"/>
</dbReference>
<dbReference type="NCBIfam" id="TIGR00962">
    <property type="entry name" value="atpA"/>
    <property type="match status" value="1"/>
</dbReference>
<dbReference type="NCBIfam" id="NF009884">
    <property type="entry name" value="PRK13343.1"/>
    <property type="match status" value="1"/>
</dbReference>
<dbReference type="PANTHER" id="PTHR48082">
    <property type="entry name" value="ATP SYNTHASE SUBUNIT ALPHA, MITOCHONDRIAL"/>
    <property type="match status" value="1"/>
</dbReference>
<dbReference type="PANTHER" id="PTHR48082:SF2">
    <property type="entry name" value="ATP SYNTHASE SUBUNIT ALPHA, MITOCHONDRIAL"/>
    <property type="match status" value="1"/>
</dbReference>
<dbReference type="Pfam" id="PF00006">
    <property type="entry name" value="ATP-synt_ab"/>
    <property type="match status" value="1"/>
</dbReference>
<dbReference type="Pfam" id="PF00306">
    <property type="entry name" value="ATP-synt_ab_C"/>
    <property type="match status" value="1"/>
</dbReference>
<dbReference type="Pfam" id="PF02874">
    <property type="entry name" value="ATP-synt_ab_N"/>
    <property type="match status" value="1"/>
</dbReference>
<dbReference type="SUPFAM" id="SSF47917">
    <property type="entry name" value="C-terminal domain of alpha and beta subunits of F1 ATP synthase"/>
    <property type="match status" value="1"/>
</dbReference>
<dbReference type="SUPFAM" id="SSF50615">
    <property type="entry name" value="N-terminal domain of alpha and beta subunits of F1 ATP synthase"/>
    <property type="match status" value="1"/>
</dbReference>
<dbReference type="SUPFAM" id="SSF52540">
    <property type="entry name" value="P-loop containing nucleoside triphosphate hydrolases"/>
    <property type="match status" value="1"/>
</dbReference>
<dbReference type="PROSITE" id="PS00152">
    <property type="entry name" value="ATPASE_ALPHA_BETA"/>
    <property type="match status" value="1"/>
</dbReference>
<evidence type="ECO:0000255" key="1">
    <source>
        <dbReference type="HAMAP-Rule" id="MF_01346"/>
    </source>
</evidence>